<gene>
    <name evidence="1" type="primary">purT</name>
    <name type="ordered locus">HQ_1464A</name>
</gene>
<organism>
    <name type="scientific">Haloquadratum walsbyi (strain DSM 16790 / HBSQ001)</name>
    <dbReference type="NCBI Taxonomy" id="362976"/>
    <lineage>
        <taxon>Archaea</taxon>
        <taxon>Methanobacteriati</taxon>
        <taxon>Methanobacteriota</taxon>
        <taxon>Stenosarchaea group</taxon>
        <taxon>Halobacteria</taxon>
        <taxon>Halobacteriales</taxon>
        <taxon>Haloferacaceae</taxon>
        <taxon>Haloquadratum</taxon>
    </lineage>
</organism>
<reference key="1">
    <citation type="journal article" date="2006" name="BMC Genomics">
        <title>The genome of the square archaeon Haloquadratum walsbyi: life at the limits of water activity.</title>
        <authorList>
            <person name="Bolhuis H."/>
            <person name="Palm P."/>
            <person name="Wende A."/>
            <person name="Falb M."/>
            <person name="Rampp M."/>
            <person name="Rodriguez-Valera F."/>
            <person name="Pfeiffer F."/>
            <person name="Oesterhelt D."/>
        </authorList>
    </citation>
    <scope>NUCLEOTIDE SEQUENCE [LARGE SCALE GENOMIC DNA]</scope>
    <source>
        <strain>DSM 16790 / HBSQ001</strain>
    </source>
</reference>
<comment type="function">
    <text evidence="1">Involved in the de novo purine biosynthesis. Catalyzes the transfer of formate to 5-phospho-ribosyl-glycinamide (GAR), producing 5-phospho-ribosyl-N-formylglycinamide (FGAR). Formate is provided by PurU via hydrolysis of 10-formyl-tetrahydrofolate.</text>
</comment>
<comment type="catalytic activity">
    <reaction evidence="1">
        <text>N(1)-(5-phospho-beta-D-ribosyl)glycinamide + formate + ATP = N(2)-formyl-N(1)-(5-phospho-beta-D-ribosyl)glycinamide + ADP + phosphate + H(+)</text>
        <dbReference type="Rhea" id="RHEA:24829"/>
        <dbReference type="ChEBI" id="CHEBI:15378"/>
        <dbReference type="ChEBI" id="CHEBI:15740"/>
        <dbReference type="ChEBI" id="CHEBI:30616"/>
        <dbReference type="ChEBI" id="CHEBI:43474"/>
        <dbReference type="ChEBI" id="CHEBI:143788"/>
        <dbReference type="ChEBI" id="CHEBI:147286"/>
        <dbReference type="ChEBI" id="CHEBI:456216"/>
        <dbReference type="EC" id="6.3.1.21"/>
    </reaction>
    <physiologicalReaction direction="left-to-right" evidence="1">
        <dbReference type="Rhea" id="RHEA:24830"/>
    </physiologicalReaction>
</comment>
<comment type="pathway">
    <text evidence="1">Purine metabolism; IMP biosynthesis via de novo pathway; N(2)-formyl-N(1)-(5-phospho-D-ribosyl)glycinamide from N(1)-(5-phospho-D-ribosyl)glycinamide (formate route): step 1/1.</text>
</comment>
<comment type="subunit">
    <text evidence="1">Homodimer.</text>
</comment>
<comment type="similarity">
    <text evidence="1">Belongs to the PurK/PurT family.</text>
</comment>
<feature type="chain" id="PRO_0000319276" description="Formate-dependent phosphoribosylglycinamide formyltransferase">
    <location>
        <begin position="1"/>
        <end position="401"/>
    </location>
</feature>
<feature type="domain" description="ATP-grasp" evidence="1">
    <location>
        <begin position="124"/>
        <end position="313"/>
    </location>
</feature>
<feature type="binding site" evidence="1">
    <location>
        <begin position="27"/>
        <end position="28"/>
    </location>
    <ligand>
        <name>N(1)-(5-phospho-beta-D-ribosyl)glycinamide</name>
        <dbReference type="ChEBI" id="CHEBI:143788"/>
    </ligand>
</feature>
<feature type="binding site" evidence="1">
    <location>
        <position position="87"/>
    </location>
    <ligand>
        <name>N(1)-(5-phospho-beta-D-ribosyl)glycinamide</name>
        <dbReference type="ChEBI" id="CHEBI:143788"/>
    </ligand>
</feature>
<feature type="binding site" evidence="1">
    <location>
        <position position="119"/>
    </location>
    <ligand>
        <name>ATP</name>
        <dbReference type="ChEBI" id="CHEBI:30616"/>
    </ligand>
</feature>
<feature type="binding site" evidence="1">
    <location>
        <position position="160"/>
    </location>
    <ligand>
        <name>ATP</name>
        <dbReference type="ChEBI" id="CHEBI:30616"/>
    </ligand>
</feature>
<feature type="binding site" evidence="1">
    <location>
        <begin position="165"/>
        <end position="170"/>
    </location>
    <ligand>
        <name>ATP</name>
        <dbReference type="ChEBI" id="CHEBI:30616"/>
    </ligand>
</feature>
<feature type="binding site" evidence="1">
    <location>
        <begin position="200"/>
        <end position="203"/>
    </location>
    <ligand>
        <name>ATP</name>
        <dbReference type="ChEBI" id="CHEBI:30616"/>
    </ligand>
</feature>
<feature type="binding site" evidence="1">
    <location>
        <position position="208"/>
    </location>
    <ligand>
        <name>ATP</name>
        <dbReference type="ChEBI" id="CHEBI:30616"/>
    </ligand>
</feature>
<feature type="binding site" evidence="1">
    <location>
        <position position="272"/>
    </location>
    <ligand>
        <name>Mg(2+)</name>
        <dbReference type="ChEBI" id="CHEBI:18420"/>
    </ligand>
</feature>
<feature type="binding site" evidence="1">
    <location>
        <position position="284"/>
    </location>
    <ligand>
        <name>Mg(2+)</name>
        <dbReference type="ChEBI" id="CHEBI:18420"/>
    </ligand>
</feature>
<feature type="binding site" evidence="1">
    <location>
        <position position="291"/>
    </location>
    <ligand>
        <name>N(1)-(5-phospho-beta-D-ribosyl)glycinamide</name>
        <dbReference type="ChEBI" id="CHEBI:143788"/>
    </ligand>
</feature>
<feature type="binding site" evidence="1">
    <location>
        <position position="361"/>
    </location>
    <ligand>
        <name>N(1)-(5-phospho-beta-D-ribosyl)glycinamide</name>
        <dbReference type="ChEBI" id="CHEBI:143788"/>
    </ligand>
</feature>
<feature type="binding site" evidence="1">
    <location>
        <begin position="368"/>
        <end position="369"/>
    </location>
    <ligand>
        <name>N(1)-(5-phospho-beta-D-ribosyl)glycinamide</name>
        <dbReference type="ChEBI" id="CHEBI:143788"/>
    </ligand>
</feature>
<evidence type="ECO:0000255" key="1">
    <source>
        <dbReference type="HAMAP-Rule" id="MF_01643"/>
    </source>
</evidence>
<sequence>MSPAHGNRLGTPESPNATTLLLLGSGELGKEVVLAAQRLGIETVAVDRYEHAPAMQVAHRDYIIDMTDATALREVVQQEDPTIIIPEIEAIATDELKRLETQGYDVVPTAQATRLTMDREWIREFAAEEVGVTTNEYAFADNYDTYRKAVEDIGIPVVVKPTMSSSGKGQSIVRESAEINGAWETARAGSRSDTGRVIIEELVEFDSEFTLLTVRHADGTTFCPPVGHTQQDGDYRTSWQPHSLTTEQRTTAQQMAQKVTDGLGGYGIFGVEFFVQDGTVIFSELSPRPHDTGLVTLSSQRLSQFDLHLRAILGLPIPDIDVERPGASAALVVDEPLTRPAFTGVDEALSMSDVDIRLFGKPEAYPGRRMGAAVATAIDIETAQERASEAVDCIHVSDDKT</sequence>
<proteinExistence type="inferred from homology"/>
<accession>Q18K60</accession>
<protein>
    <recommendedName>
        <fullName evidence="1">Formate-dependent phosphoribosylglycinamide formyltransferase</fullName>
        <ecNumber evidence="1">6.3.1.21</ecNumber>
    </recommendedName>
    <alternativeName>
        <fullName evidence="1">5'-phosphoribosylglycinamide transformylase 2</fullName>
    </alternativeName>
    <alternativeName>
        <fullName evidence="1">Formate-dependent GAR transformylase</fullName>
    </alternativeName>
    <alternativeName>
        <fullName evidence="1">GAR transformylase 2</fullName>
        <shortName evidence="1">GART 2</shortName>
    </alternativeName>
    <alternativeName>
        <fullName evidence="1">Non-folate glycinamide ribonucleotide transformylase</fullName>
    </alternativeName>
    <alternativeName>
        <fullName evidence="1">Phosphoribosylglycinamide formyltransferase 2</fullName>
    </alternativeName>
</protein>
<dbReference type="EC" id="6.3.1.21" evidence="1"/>
<dbReference type="EMBL" id="AM180088">
    <property type="protein sequence ID" value="CAJ51592.1"/>
    <property type="molecule type" value="Genomic_DNA"/>
</dbReference>
<dbReference type="RefSeq" id="WP_011570746.1">
    <property type="nucleotide sequence ID" value="NC_008212.1"/>
</dbReference>
<dbReference type="SMR" id="Q18K60"/>
<dbReference type="STRING" id="362976.HQ_1464A"/>
<dbReference type="GeneID" id="4194541"/>
<dbReference type="KEGG" id="hwa:HQ_1464A"/>
<dbReference type="eggNOG" id="arCOG01598">
    <property type="taxonomic scope" value="Archaea"/>
</dbReference>
<dbReference type="HOGENOM" id="CLU_011534_1_3_2"/>
<dbReference type="UniPathway" id="UPA00074">
    <property type="reaction ID" value="UER00127"/>
</dbReference>
<dbReference type="Proteomes" id="UP000001975">
    <property type="component" value="Chromosome"/>
</dbReference>
<dbReference type="GO" id="GO:0005829">
    <property type="term" value="C:cytosol"/>
    <property type="evidence" value="ECO:0007669"/>
    <property type="project" value="TreeGrafter"/>
</dbReference>
<dbReference type="GO" id="GO:0005524">
    <property type="term" value="F:ATP binding"/>
    <property type="evidence" value="ECO:0007669"/>
    <property type="project" value="UniProtKB-UniRule"/>
</dbReference>
<dbReference type="GO" id="GO:0000287">
    <property type="term" value="F:magnesium ion binding"/>
    <property type="evidence" value="ECO:0007669"/>
    <property type="project" value="InterPro"/>
</dbReference>
<dbReference type="GO" id="GO:0043815">
    <property type="term" value="F:phosphoribosylglycinamide formyltransferase 2 activity"/>
    <property type="evidence" value="ECO:0007669"/>
    <property type="project" value="UniProtKB-UniRule"/>
</dbReference>
<dbReference type="GO" id="GO:0004644">
    <property type="term" value="F:phosphoribosylglycinamide formyltransferase activity"/>
    <property type="evidence" value="ECO:0007669"/>
    <property type="project" value="InterPro"/>
</dbReference>
<dbReference type="GO" id="GO:0006189">
    <property type="term" value="P:'de novo' IMP biosynthetic process"/>
    <property type="evidence" value="ECO:0007669"/>
    <property type="project" value="UniProtKB-UniRule"/>
</dbReference>
<dbReference type="Gene3D" id="3.40.50.20">
    <property type="match status" value="1"/>
</dbReference>
<dbReference type="Gene3D" id="3.30.1490.20">
    <property type="entry name" value="ATP-grasp fold, A domain"/>
    <property type="match status" value="1"/>
</dbReference>
<dbReference type="Gene3D" id="3.30.470.20">
    <property type="entry name" value="ATP-grasp fold, B domain"/>
    <property type="match status" value="1"/>
</dbReference>
<dbReference type="HAMAP" id="MF_01643">
    <property type="entry name" value="PurT"/>
    <property type="match status" value="1"/>
</dbReference>
<dbReference type="InterPro" id="IPR011761">
    <property type="entry name" value="ATP-grasp"/>
</dbReference>
<dbReference type="InterPro" id="IPR003135">
    <property type="entry name" value="ATP-grasp_carboxylate-amine"/>
</dbReference>
<dbReference type="InterPro" id="IPR013815">
    <property type="entry name" value="ATP_grasp_subdomain_1"/>
</dbReference>
<dbReference type="InterPro" id="IPR016185">
    <property type="entry name" value="PreATP-grasp_dom_sf"/>
</dbReference>
<dbReference type="InterPro" id="IPR005862">
    <property type="entry name" value="PurT"/>
</dbReference>
<dbReference type="InterPro" id="IPR054350">
    <property type="entry name" value="PurT/PurK_preATP-grasp"/>
</dbReference>
<dbReference type="InterPro" id="IPR048740">
    <property type="entry name" value="PurT_C"/>
</dbReference>
<dbReference type="InterPro" id="IPR011054">
    <property type="entry name" value="Rudment_hybrid_motif"/>
</dbReference>
<dbReference type="NCBIfam" id="NF006766">
    <property type="entry name" value="PRK09288.1"/>
    <property type="match status" value="1"/>
</dbReference>
<dbReference type="NCBIfam" id="TIGR01142">
    <property type="entry name" value="purT"/>
    <property type="match status" value="1"/>
</dbReference>
<dbReference type="PANTHER" id="PTHR43055">
    <property type="entry name" value="FORMATE-DEPENDENT PHOSPHORIBOSYLGLYCINAMIDE FORMYLTRANSFERASE"/>
    <property type="match status" value="1"/>
</dbReference>
<dbReference type="PANTHER" id="PTHR43055:SF1">
    <property type="entry name" value="FORMATE-DEPENDENT PHOSPHORIBOSYLGLYCINAMIDE FORMYLTRANSFERASE"/>
    <property type="match status" value="1"/>
</dbReference>
<dbReference type="Pfam" id="PF02222">
    <property type="entry name" value="ATP-grasp"/>
    <property type="match status" value="1"/>
</dbReference>
<dbReference type="Pfam" id="PF21244">
    <property type="entry name" value="PurT_C"/>
    <property type="match status" value="1"/>
</dbReference>
<dbReference type="Pfam" id="PF22660">
    <property type="entry name" value="RS_preATP-grasp-like"/>
    <property type="match status" value="1"/>
</dbReference>
<dbReference type="SUPFAM" id="SSF56059">
    <property type="entry name" value="Glutathione synthetase ATP-binding domain-like"/>
    <property type="match status" value="1"/>
</dbReference>
<dbReference type="SUPFAM" id="SSF52440">
    <property type="entry name" value="PreATP-grasp domain"/>
    <property type="match status" value="1"/>
</dbReference>
<dbReference type="SUPFAM" id="SSF51246">
    <property type="entry name" value="Rudiment single hybrid motif"/>
    <property type="match status" value="1"/>
</dbReference>
<dbReference type="PROSITE" id="PS50975">
    <property type="entry name" value="ATP_GRASP"/>
    <property type="match status" value="1"/>
</dbReference>
<keyword id="KW-0067">ATP-binding</keyword>
<keyword id="KW-0436">Ligase</keyword>
<keyword id="KW-0460">Magnesium</keyword>
<keyword id="KW-0479">Metal-binding</keyword>
<keyword id="KW-0547">Nucleotide-binding</keyword>
<keyword id="KW-0658">Purine biosynthesis</keyword>
<keyword id="KW-1185">Reference proteome</keyword>
<name>PURT_HALWD</name>